<name>POXJ_PENOX</name>
<evidence type="ECO:0000255" key="1">
    <source>
        <dbReference type="PROSITE-ProRule" id="PRU00221"/>
    </source>
</evidence>
<evidence type="ECO:0000269" key="2">
    <source>
    </source>
</evidence>
<evidence type="ECO:0000303" key="3">
    <source>
    </source>
</evidence>
<evidence type="ECO:0000305" key="4"/>
<evidence type="ECO:0000305" key="5">
    <source>
    </source>
</evidence>
<evidence type="ECO:0000305" key="6">
    <source>
    </source>
</evidence>
<comment type="function">
    <text evidence="2 6">WD40 repeat protein; part of the gene cluster that mediates the biosynthesis of oxaleimides, cytotoxic compounds containing an unusual disubstituted succinimide moiety (PubMed:28365998). The first step of the pathway is provided by the HR-PKS poxF that serves in a new mode of collaborative biosynthesis with the PKS-NRPS poxE, by providing the olefin containing amino acid substrate via the synthesis of an ACP-bound dec-4-enoate (PubMed:28365998). The cytochrome P450 monooxygenase poxM-catalyzed oxidation at the alpha-position creates the enzyme-bound 2-hydroxydec-4-enoyl-ACP thioester, which may be prone to spontaneous hydrolysis to yield 2-hydroxydec-4-enoic acid due to increased electrophilicity of the carbonyl (PubMed:28365998). 2-hydroxydec-4-enoic acid can then be further oxidized by poxM to yield the alpha-ketoacid 2-oxodec-4-enoicacid, which is reductively aminated by the aminotransferase poxL to yield (S,E)-2-aminodec-4-enoic acid (PubMed:28365998). The Hybrid PKS-NRPS synthetase poxE then performs condensation between the octaketide product of its PKS modules and the amino group of (S,E)-2-aminodec-4-enoic acid which is activated and incorporated by the adenylation domain (PubMed:28365998). The resulting aminoacyl product can be cyclized by the Diels-Alderase PoxQ and reductively released by the reductive (R) domain of poxE to yield an aldehyde intermediate (Probable) (PubMed:28365998). The released aldehyde is then substrate for a Knoevenagel condensation by the hydrolyase poxO followed by an oxidation at the 5-position of the pyrrolidone ring (PubMed:28365998). The presence of the olefin from the amino acid building block allows for migration of the substituted allyl group to occur (PubMed:28365998). This allylic transposition reaction takes place in a conjugate addition, semipinacol-like fashion to yield a succinimide intermediate (PubMed:28365998). Iterative two-electron oxidations of the C7 methyl of the succinimide intermediate to the carboxylic acid can be catalyzed by one of two remaining cytochrome P450 monooxygenasess poxC or poxD to yield oxaleimide A (PubMed:28365998). Subsequent oxidation yields the maleimide scaffold oxaleimide I (PubMed:28365998). Both oxaleimide A and oxaleimide I can undergo oxidative modifications in the decalin ring to yield the series of products oxaleimides B to H (PubMed:28365998).</text>
</comment>
<comment type="pathway">
    <text evidence="5">Secondary metabolite biosynthesis.</text>
</comment>
<comment type="induction">
    <text evidence="2">Expression is positively regulated by the oxaleimides biosynthesis cluster-specific transcription factor poxB.</text>
</comment>
<comment type="similarity">
    <text evidence="4">Belongs to the WD repeat rae1 family.</text>
</comment>
<sequence>MVDNQGPLAKDVSLANPPSDSISELSWSPVANHLAMSSWDQTVRIYDVSQSGNGEGQALFNFPAPVLSCTFSPDGAKVLGGATDGSARLMDLVAGKEAQQVAAHDAPVRCVRFFGNPGVRDPIAVTGSWDQTVKYWDLRQDRPLATLQCQERVYAMDLCQNLLVVATAGRLVHVVQLSNADQIYKTVTSPLKHQTRTVTCIPDASGFAIGSTEGRTGFHYVDESKSSLNFTFRCHREMAASKNTQNVYAVNDVSFHPKYYTFSTAGADGTFAFWDKDAHHRLKSFPSVGAPITSTGFNHDGTIFAYAVSYDWSKGFRYNTPEHPTRVVCHPVDDVDCRPKNPVKR</sequence>
<protein>
    <recommendedName>
        <fullName evidence="3">WD40 repeat protein poxJ</fullName>
    </recommendedName>
    <alternativeName>
        <fullName evidence="3">Oxaleimides biosynthesis cluster protein J</fullName>
    </alternativeName>
</protein>
<reference key="1">
    <citation type="journal article" date="2017" name="J. Am. Chem. Soc.">
        <title>Collaborative Biosynthesis of Maleimide- and Succinimide-Containing Natural Products by Fungal Polyketide Megasynthases.</title>
        <authorList>
            <person name="Sato M."/>
            <person name="Dander J.E."/>
            <person name="Sato C."/>
            <person name="Hung Y.S."/>
            <person name="Gao S.S."/>
            <person name="Tang M.C."/>
            <person name="Hang L."/>
            <person name="Winter J.M."/>
            <person name="Garg N.K."/>
            <person name="Watanabe K."/>
            <person name="Tang Y."/>
        </authorList>
    </citation>
    <scope>NUCLEOTIDE SEQUENCE [GENOMIC DNA]</scope>
    <scope>FUNCTION</scope>
    <scope>INDUCTION</scope>
    <scope>PATHWAY</scope>
    <source>
        <strain>K85</strain>
    </source>
</reference>
<reference key="2">
    <citation type="journal article" date="2020" name="Chem. Commun. (Camb.)">
        <title>Evidence for enzyme catalysed intramolecular [4+2] Diels-Alder cyclization during the biosynthesis of pyrichalasin H.</title>
        <authorList>
            <person name="Hantke V."/>
            <person name="Skellam E.J."/>
            <person name="Cox R.J."/>
        </authorList>
    </citation>
    <scope>FUNCTION</scope>
</reference>
<organism>
    <name type="scientific">Penicillium oxalicum</name>
    <dbReference type="NCBI Taxonomy" id="69781"/>
    <lineage>
        <taxon>Eukaryota</taxon>
        <taxon>Fungi</taxon>
        <taxon>Dikarya</taxon>
        <taxon>Ascomycota</taxon>
        <taxon>Pezizomycotina</taxon>
        <taxon>Eurotiomycetes</taxon>
        <taxon>Eurotiomycetidae</taxon>
        <taxon>Eurotiales</taxon>
        <taxon>Aspergillaceae</taxon>
        <taxon>Penicillium</taxon>
    </lineage>
</organism>
<gene>
    <name evidence="3" type="primary">poxJ</name>
</gene>
<feature type="chain" id="PRO_0000453773" description="WD40 repeat protein poxJ">
    <location>
        <begin position="1"/>
        <end position="345"/>
    </location>
</feature>
<feature type="repeat" description="WD 1" evidence="1">
    <location>
        <begin position="15"/>
        <end position="49"/>
    </location>
</feature>
<feature type="repeat" description="WD 2" evidence="1">
    <location>
        <begin position="59"/>
        <end position="100"/>
    </location>
</feature>
<feature type="repeat" description="WD 3" evidence="1">
    <location>
        <begin position="101"/>
        <end position="146"/>
    </location>
</feature>
<feature type="repeat" description="WD 4" evidence="1">
    <location>
        <begin position="250"/>
        <end position="284"/>
    </location>
</feature>
<accession>A0A1W5T363</accession>
<dbReference type="EMBL" id="KY764299">
    <property type="protein sequence ID" value="ARF05984.1"/>
    <property type="molecule type" value="Genomic_DNA"/>
</dbReference>
<dbReference type="SMR" id="A0A1W5T363"/>
<dbReference type="FunFam" id="2.130.10.10:FF:000190">
    <property type="entry name" value="Nuclear pore complex subunit"/>
    <property type="match status" value="1"/>
</dbReference>
<dbReference type="Gene3D" id="2.130.10.10">
    <property type="entry name" value="YVTN repeat-like/Quinoprotein amine dehydrogenase"/>
    <property type="match status" value="1"/>
</dbReference>
<dbReference type="InterPro" id="IPR015943">
    <property type="entry name" value="WD40/YVTN_repeat-like_dom_sf"/>
</dbReference>
<dbReference type="InterPro" id="IPR036322">
    <property type="entry name" value="WD40_repeat_dom_sf"/>
</dbReference>
<dbReference type="InterPro" id="IPR001680">
    <property type="entry name" value="WD40_rpt"/>
</dbReference>
<dbReference type="PANTHER" id="PTHR10971">
    <property type="entry name" value="MRNA EXPORT FACTOR AND BUB3"/>
    <property type="match status" value="1"/>
</dbReference>
<dbReference type="Pfam" id="PF00400">
    <property type="entry name" value="WD40"/>
    <property type="match status" value="4"/>
</dbReference>
<dbReference type="SMART" id="SM00320">
    <property type="entry name" value="WD40"/>
    <property type="match status" value="5"/>
</dbReference>
<dbReference type="SUPFAM" id="SSF50978">
    <property type="entry name" value="WD40 repeat-like"/>
    <property type="match status" value="1"/>
</dbReference>
<dbReference type="PROSITE" id="PS50082">
    <property type="entry name" value="WD_REPEATS_2"/>
    <property type="match status" value="2"/>
</dbReference>
<dbReference type="PROSITE" id="PS50294">
    <property type="entry name" value="WD_REPEATS_REGION"/>
    <property type="match status" value="2"/>
</dbReference>
<keyword id="KW-0677">Repeat</keyword>
<keyword id="KW-0853">WD repeat</keyword>
<proteinExistence type="evidence at transcript level"/>